<dbReference type="EMBL" id="CP000243">
    <property type="protein sequence ID" value="ABE09970.1"/>
    <property type="status" value="ALT_INIT"/>
    <property type="molecule type" value="Genomic_DNA"/>
</dbReference>
<dbReference type="SMR" id="Q1R3U4"/>
<dbReference type="KEGG" id="eci:UTI89_C4558"/>
<dbReference type="HOGENOM" id="CLU_081861_0_0_6"/>
<dbReference type="Proteomes" id="UP000001952">
    <property type="component" value="Chromosome"/>
</dbReference>
<dbReference type="GO" id="GO:0005737">
    <property type="term" value="C:cytoplasm"/>
    <property type="evidence" value="ECO:0007669"/>
    <property type="project" value="UniProtKB-SubCell"/>
</dbReference>
<dbReference type="GO" id="GO:0003677">
    <property type="term" value="F:DNA binding"/>
    <property type="evidence" value="ECO:0007669"/>
    <property type="project" value="UniProtKB-KW"/>
</dbReference>
<dbReference type="GO" id="GO:0003700">
    <property type="term" value="F:DNA-binding transcription factor activity"/>
    <property type="evidence" value="ECO:0007669"/>
    <property type="project" value="UniProtKB-UniRule"/>
</dbReference>
<dbReference type="GO" id="GO:0006633">
    <property type="term" value="P:fatty acid biosynthetic process"/>
    <property type="evidence" value="ECO:0007669"/>
    <property type="project" value="UniProtKB-UniRule"/>
</dbReference>
<dbReference type="GO" id="GO:0045717">
    <property type="term" value="P:negative regulation of fatty acid biosynthetic process"/>
    <property type="evidence" value="ECO:0007669"/>
    <property type="project" value="UniProtKB-UniRule"/>
</dbReference>
<dbReference type="FunFam" id="1.10.10.60:FF:000034">
    <property type="entry name" value="HTH-type transcriptional repressor FabR"/>
    <property type="match status" value="1"/>
</dbReference>
<dbReference type="FunFam" id="1.10.357.10:FF:000001">
    <property type="entry name" value="HTH-type transcriptional repressor FabR"/>
    <property type="match status" value="1"/>
</dbReference>
<dbReference type="Gene3D" id="1.10.10.60">
    <property type="entry name" value="Homeodomain-like"/>
    <property type="match status" value="1"/>
</dbReference>
<dbReference type="Gene3D" id="1.10.357.10">
    <property type="entry name" value="Tetracycline Repressor, domain 2"/>
    <property type="match status" value="1"/>
</dbReference>
<dbReference type="HAMAP" id="MF_01190">
    <property type="entry name" value="HTH_type_FabR"/>
    <property type="match status" value="1"/>
</dbReference>
<dbReference type="InterPro" id="IPR054129">
    <property type="entry name" value="DesT_TetR_C"/>
</dbReference>
<dbReference type="InterPro" id="IPR009057">
    <property type="entry name" value="Homeodomain-like_sf"/>
</dbReference>
<dbReference type="InterPro" id="IPR001647">
    <property type="entry name" value="HTH_TetR"/>
</dbReference>
<dbReference type="InterPro" id="IPR050692">
    <property type="entry name" value="HTH_transcr_repressor_FabR"/>
</dbReference>
<dbReference type="InterPro" id="IPR023764">
    <property type="entry name" value="Tscrpt_reg_HTH_FabR"/>
</dbReference>
<dbReference type="NCBIfam" id="NF008402">
    <property type="entry name" value="PRK11202.1"/>
    <property type="match status" value="1"/>
</dbReference>
<dbReference type="PANTHER" id="PTHR47752">
    <property type="entry name" value="HTH-TYPE TRANSCRIPTIONAL REPRESSOR FABR"/>
    <property type="match status" value="1"/>
</dbReference>
<dbReference type="PANTHER" id="PTHR47752:SF1">
    <property type="entry name" value="HTH-TYPE TRANSCRIPTIONAL REPRESSOR FABR"/>
    <property type="match status" value="1"/>
</dbReference>
<dbReference type="Pfam" id="PF21943">
    <property type="entry name" value="TetR_C_46"/>
    <property type="match status" value="1"/>
</dbReference>
<dbReference type="Pfam" id="PF00440">
    <property type="entry name" value="TetR_N"/>
    <property type="match status" value="1"/>
</dbReference>
<dbReference type="SUPFAM" id="SSF46689">
    <property type="entry name" value="Homeodomain-like"/>
    <property type="match status" value="1"/>
</dbReference>
<dbReference type="PROSITE" id="PS50977">
    <property type="entry name" value="HTH_TETR_2"/>
    <property type="match status" value="1"/>
</dbReference>
<comment type="function">
    <text evidence="1">Represses the transcription of fabB, involved in unsaturated fatty acid (UFA) biosynthesis. By controlling UFA production, FabR directly influences the physical properties of the membrane bilayer.</text>
</comment>
<comment type="subunit">
    <text evidence="1">Homodimer.</text>
</comment>
<comment type="subcellular location">
    <subcellularLocation>
        <location evidence="1">Cytoplasm</location>
    </subcellularLocation>
</comment>
<comment type="sequence caution" evidence="2">
    <conflict type="erroneous initiation">
        <sequence resource="EMBL-CDS" id="ABE09970"/>
    </conflict>
</comment>
<proteinExistence type="inferred from homology"/>
<gene>
    <name evidence="1" type="primary">fabR</name>
    <name type="ordered locus">UTI89_C4558</name>
</gene>
<accession>Q1R3U4</accession>
<name>FABR_ECOUT</name>
<reference key="1">
    <citation type="journal article" date="2006" name="Proc. Natl. Acad. Sci. U.S.A.">
        <title>Identification of genes subject to positive selection in uropathogenic strains of Escherichia coli: a comparative genomics approach.</title>
        <authorList>
            <person name="Chen S.L."/>
            <person name="Hung C.-S."/>
            <person name="Xu J."/>
            <person name="Reigstad C.S."/>
            <person name="Magrini V."/>
            <person name="Sabo A."/>
            <person name="Blasiar D."/>
            <person name="Bieri T."/>
            <person name="Meyer R.R."/>
            <person name="Ozersky P."/>
            <person name="Armstrong J.R."/>
            <person name="Fulton R.S."/>
            <person name="Latreille J.P."/>
            <person name="Spieth J."/>
            <person name="Hooton T.M."/>
            <person name="Mardis E.R."/>
            <person name="Hultgren S.J."/>
            <person name="Gordon J.I."/>
        </authorList>
    </citation>
    <scope>NUCLEOTIDE SEQUENCE [LARGE SCALE GENOMIC DNA]</scope>
    <source>
        <strain>UTI89 / UPEC</strain>
    </source>
</reference>
<keyword id="KW-0963">Cytoplasm</keyword>
<keyword id="KW-0238">DNA-binding</keyword>
<keyword id="KW-0275">Fatty acid biosynthesis</keyword>
<keyword id="KW-0276">Fatty acid metabolism</keyword>
<keyword id="KW-0444">Lipid biosynthesis</keyword>
<keyword id="KW-0443">Lipid metabolism</keyword>
<keyword id="KW-0678">Repressor</keyword>
<keyword id="KW-0804">Transcription</keyword>
<keyword id="KW-0805">Transcription regulation</keyword>
<evidence type="ECO:0000255" key="1">
    <source>
        <dbReference type="HAMAP-Rule" id="MF_01190"/>
    </source>
</evidence>
<evidence type="ECO:0000305" key="2"/>
<organism>
    <name type="scientific">Escherichia coli (strain UTI89 / UPEC)</name>
    <dbReference type="NCBI Taxonomy" id="364106"/>
    <lineage>
        <taxon>Bacteria</taxon>
        <taxon>Pseudomonadati</taxon>
        <taxon>Pseudomonadota</taxon>
        <taxon>Gammaproteobacteria</taxon>
        <taxon>Enterobacterales</taxon>
        <taxon>Enterobacteriaceae</taxon>
        <taxon>Escherichia</taxon>
    </lineage>
</organism>
<protein>
    <recommendedName>
        <fullName evidence="1">HTH-type transcriptional repressor FabR</fullName>
    </recommendedName>
</protein>
<sequence length="215" mass="24434">MGVRAQQKEKTRRSLVEAAFSQLSAERSFASLSLREVAREAGIAPTSFYRHFRDVDELGLTMVDESGLMLRQLMRQARQRIAKGGSVIRTSVSTFMEFIGNNPNAFRLLLRERSGTSAAFRAAVAREIQHFIAELADYLELENHMPRAFTEAQAEAMVTIVFSAGAEALDVGVEQRRQLEERLVLQLRMISKGAYYWYRREQEKTTIIPGNVKDE</sequence>
<feature type="chain" id="PRO_0000293565" description="HTH-type transcriptional repressor FabR">
    <location>
        <begin position="1"/>
        <end position="215"/>
    </location>
</feature>
<feature type="domain" description="HTH tetR-type" evidence="1">
    <location>
        <begin position="10"/>
        <end position="70"/>
    </location>
</feature>
<feature type="DNA-binding region" description="H-T-H motif" evidence="1">
    <location>
        <begin position="33"/>
        <end position="52"/>
    </location>
</feature>